<reference key="1">
    <citation type="submission" date="2009-01" db="EMBL/GenBank/DDBJ databases">
        <title>Complete sequence of Clostridium cellulolyticum H10.</title>
        <authorList>
            <consortium name="US DOE Joint Genome Institute"/>
            <person name="Lucas S."/>
            <person name="Copeland A."/>
            <person name="Lapidus A."/>
            <person name="Glavina del Rio T."/>
            <person name="Dalin E."/>
            <person name="Tice H."/>
            <person name="Bruce D."/>
            <person name="Goodwin L."/>
            <person name="Pitluck S."/>
            <person name="Chertkov O."/>
            <person name="Saunders E."/>
            <person name="Brettin T."/>
            <person name="Detter J.C."/>
            <person name="Han C."/>
            <person name="Larimer F."/>
            <person name="Land M."/>
            <person name="Hauser L."/>
            <person name="Kyrpides N."/>
            <person name="Ivanova N."/>
            <person name="Zhou J."/>
            <person name="Richardson P."/>
        </authorList>
    </citation>
    <scope>NUCLEOTIDE SEQUENCE [LARGE SCALE GENOMIC DNA]</scope>
    <source>
        <strain>ATCC 35319 / DSM 5812 / JCM 6584 / H10</strain>
    </source>
</reference>
<dbReference type="EC" id="7.1.2.2" evidence="1"/>
<dbReference type="EMBL" id="CP001348">
    <property type="protein sequence ID" value="ACL74659.1"/>
    <property type="molecule type" value="Genomic_DNA"/>
</dbReference>
<dbReference type="RefSeq" id="WP_012634724.1">
    <property type="nucleotide sequence ID" value="NC_011898.1"/>
</dbReference>
<dbReference type="SMR" id="B8I579"/>
<dbReference type="STRING" id="394503.Ccel_0272"/>
<dbReference type="KEGG" id="cce:Ccel_0272"/>
<dbReference type="eggNOG" id="COG0055">
    <property type="taxonomic scope" value="Bacteria"/>
</dbReference>
<dbReference type="HOGENOM" id="CLU_022398_0_2_9"/>
<dbReference type="OrthoDB" id="9801639at2"/>
<dbReference type="Proteomes" id="UP000001349">
    <property type="component" value="Chromosome"/>
</dbReference>
<dbReference type="GO" id="GO:0005886">
    <property type="term" value="C:plasma membrane"/>
    <property type="evidence" value="ECO:0007669"/>
    <property type="project" value="UniProtKB-SubCell"/>
</dbReference>
<dbReference type="GO" id="GO:0045259">
    <property type="term" value="C:proton-transporting ATP synthase complex"/>
    <property type="evidence" value="ECO:0007669"/>
    <property type="project" value="UniProtKB-KW"/>
</dbReference>
<dbReference type="GO" id="GO:0005524">
    <property type="term" value="F:ATP binding"/>
    <property type="evidence" value="ECO:0007669"/>
    <property type="project" value="UniProtKB-UniRule"/>
</dbReference>
<dbReference type="GO" id="GO:0016887">
    <property type="term" value="F:ATP hydrolysis activity"/>
    <property type="evidence" value="ECO:0007669"/>
    <property type="project" value="InterPro"/>
</dbReference>
<dbReference type="GO" id="GO:0046933">
    <property type="term" value="F:proton-transporting ATP synthase activity, rotational mechanism"/>
    <property type="evidence" value="ECO:0007669"/>
    <property type="project" value="UniProtKB-UniRule"/>
</dbReference>
<dbReference type="CDD" id="cd18110">
    <property type="entry name" value="ATP-synt_F1_beta_C"/>
    <property type="match status" value="1"/>
</dbReference>
<dbReference type="CDD" id="cd18115">
    <property type="entry name" value="ATP-synt_F1_beta_N"/>
    <property type="match status" value="1"/>
</dbReference>
<dbReference type="CDD" id="cd01133">
    <property type="entry name" value="F1-ATPase_beta_CD"/>
    <property type="match status" value="1"/>
</dbReference>
<dbReference type="FunFam" id="1.10.1140.10:FF:000001">
    <property type="entry name" value="ATP synthase subunit beta"/>
    <property type="match status" value="1"/>
</dbReference>
<dbReference type="FunFam" id="3.40.50.300:FF:000026">
    <property type="entry name" value="ATP synthase subunit beta"/>
    <property type="match status" value="1"/>
</dbReference>
<dbReference type="Gene3D" id="2.40.10.170">
    <property type="match status" value="1"/>
</dbReference>
<dbReference type="Gene3D" id="1.10.1140.10">
    <property type="entry name" value="Bovine Mitochondrial F1-atpase, Atp Synthase Beta Chain, Chain D, domain 3"/>
    <property type="match status" value="1"/>
</dbReference>
<dbReference type="Gene3D" id="3.40.50.300">
    <property type="entry name" value="P-loop containing nucleotide triphosphate hydrolases"/>
    <property type="match status" value="1"/>
</dbReference>
<dbReference type="HAMAP" id="MF_01347">
    <property type="entry name" value="ATP_synth_beta_bact"/>
    <property type="match status" value="1"/>
</dbReference>
<dbReference type="InterPro" id="IPR003593">
    <property type="entry name" value="AAA+_ATPase"/>
</dbReference>
<dbReference type="InterPro" id="IPR055190">
    <property type="entry name" value="ATP-synt_VA_C"/>
</dbReference>
<dbReference type="InterPro" id="IPR005722">
    <property type="entry name" value="ATP_synth_F1_bsu"/>
</dbReference>
<dbReference type="InterPro" id="IPR020003">
    <property type="entry name" value="ATPase_a/bsu_AS"/>
</dbReference>
<dbReference type="InterPro" id="IPR050053">
    <property type="entry name" value="ATPase_alpha/beta_chains"/>
</dbReference>
<dbReference type="InterPro" id="IPR004100">
    <property type="entry name" value="ATPase_F1/V1/A1_a/bsu_N"/>
</dbReference>
<dbReference type="InterPro" id="IPR036121">
    <property type="entry name" value="ATPase_F1/V1/A1_a/bsu_N_sf"/>
</dbReference>
<dbReference type="InterPro" id="IPR000194">
    <property type="entry name" value="ATPase_F1/V1/A1_a/bsu_nucl-bd"/>
</dbReference>
<dbReference type="InterPro" id="IPR024034">
    <property type="entry name" value="ATPase_F1/V1_b/a_C"/>
</dbReference>
<dbReference type="InterPro" id="IPR027417">
    <property type="entry name" value="P-loop_NTPase"/>
</dbReference>
<dbReference type="NCBIfam" id="TIGR01039">
    <property type="entry name" value="atpD"/>
    <property type="match status" value="1"/>
</dbReference>
<dbReference type="PANTHER" id="PTHR15184">
    <property type="entry name" value="ATP SYNTHASE"/>
    <property type="match status" value="1"/>
</dbReference>
<dbReference type="PANTHER" id="PTHR15184:SF71">
    <property type="entry name" value="ATP SYNTHASE SUBUNIT BETA, MITOCHONDRIAL"/>
    <property type="match status" value="1"/>
</dbReference>
<dbReference type="Pfam" id="PF00006">
    <property type="entry name" value="ATP-synt_ab"/>
    <property type="match status" value="1"/>
</dbReference>
<dbReference type="Pfam" id="PF02874">
    <property type="entry name" value="ATP-synt_ab_N"/>
    <property type="match status" value="1"/>
</dbReference>
<dbReference type="Pfam" id="PF22919">
    <property type="entry name" value="ATP-synt_VA_C"/>
    <property type="match status" value="1"/>
</dbReference>
<dbReference type="SMART" id="SM00382">
    <property type="entry name" value="AAA"/>
    <property type="match status" value="1"/>
</dbReference>
<dbReference type="SUPFAM" id="SSF47917">
    <property type="entry name" value="C-terminal domain of alpha and beta subunits of F1 ATP synthase"/>
    <property type="match status" value="1"/>
</dbReference>
<dbReference type="SUPFAM" id="SSF50615">
    <property type="entry name" value="N-terminal domain of alpha and beta subunits of F1 ATP synthase"/>
    <property type="match status" value="1"/>
</dbReference>
<dbReference type="SUPFAM" id="SSF52540">
    <property type="entry name" value="P-loop containing nucleoside triphosphate hydrolases"/>
    <property type="match status" value="1"/>
</dbReference>
<dbReference type="PROSITE" id="PS00152">
    <property type="entry name" value="ATPASE_ALPHA_BETA"/>
    <property type="match status" value="1"/>
</dbReference>
<sequence length="465" mass="50501">MAGSSGVIVQVIGPVLDIRFENGILPDIYNAIKIPADSGTVTAEVMQHLGNDTVRCVAMSSTDGLVRGMKAEDTGDAITVPVGKEVLGRIFNVLGEPVDKAGPVEPTAYLPIHREAPSLEEQRPSTEILETGIKVVDLLAPYAKGGKIGLFGGAGVGKTVLIMELIRNIATEHGGYSIFTGVGERTREGNDLWHDMNDSGVIEKTAMVFGQMNEPPGARMRVGLTGLTMAEYFRDQMGQDVLLFIDNIFRFVQAGSEVSALLGRIPSAVGYQPTLATDVGALQERIASTNKGSITSVQAVYVPADDLTDPAPATTFAHLDATTVLSRDIVAMGIYPAVDPLESTSRILDPKVVGEEHYTIARKVQEILQRNKELQDIIAILGMDELPEEDKLTVFRARKIQRYLSQPFFVGEQFTGYKGKYVPIKETIRGFKEIIDGKMDNISEAAFYMKGTIEEVYEAAKEMEG</sequence>
<organism>
    <name type="scientific">Ruminiclostridium cellulolyticum (strain ATCC 35319 / DSM 5812 / JCM 6584 / H10)</name>
    <name type="common">Clostridium cellulolyticum</name>
    <dbReference type="NCBI Taxonomy" id="394503"/>
    <lineage>
        <taxon>Bacteria</taxon>
        <taxon>Bacillati</taxon>
        <taxon>Bacillota</taxon>
        <taxon>Clostridia</taxon>
        <taxon>Eubacteriales</taxon>
        <taxon>Oscillospiraceae</taxon>
        <taxon>Ruminiclostridium</taxon>
    </lineage>
</organism>
<proteinExistence type="inferred from homology"/>
<name>ATPB_RUMCH</name>
<keyword id="KW-0066">ATP synthesis</keyword>
<keyword id="KW-0067">ATP-binding</keyword>
<keyword id="KW-1003">Cell membrane</keyword>
<keyword id="KW-0139">CF(1)</keyword>
<keyword id="KW-0375">Hydrogen ion transport</keyword>
<keyword id="KW-0406">Ion transport</keyword>
<keyword id="KW-0472">Membrane</keyword>
<keyword id="KW-0547">Nucleotide-binding</keyword>
<keyword id="KW-1185">Reference proteome</keyword>
<keyword id="KW-1278">Translocase</keyword>
<keyword id="KW-0813">Transport</keyword>
<protein>
    <recommendedName>
        <fullName evidence="1">ATP synthase subunit beta</fullName>
        <ecNumber evidence="1">7.1.2.2</ecNumber>
    </recommendedName>
    <alternativeName>
        <fullName evidence="1">ATP synthase F1 sector subunit beta</fullName>
    </alternativeName>
    <alternativeName>
        <fullName evidence="1">F-ATPase subunit beta</fullName>
    </alternativeName>
</protein>
<accession>B8I579</accession>
<evidence type="ECO:0000255" key="1">
    <source>
        <dbReference type="HAMAP-Rule" id="MF_01347"/>
    </source>
</evidence>
<gene>
    <name evidence="1" type="primary">atpD</name>
    <name type="ordered locus">Ccel_0272</name>
</gene>
<comment type="function">
    <text evidence="1">Produces ATP from ADP in the presence of a proton gradient across the membrane. The catalytic sites are hosted primarily by the beta subunits.</text>
</comment>
<comment type="catalytic activity">
    <reaction evidence="1">
        <text>ATP + H2O + 4 H(+)(in) = ADP + phosphate + 5 H(+)(out)</text>
        <dbReference type="Rhea" id="RHEA:57720"/>
        <dbReference type="ChEBI" id="CHEBI:15377"/>
        <dbReference type="ChEBI" id="CHEBI:15378"/>
        <dbReference type="ChEBI" id="CHEBI:30616"/>
        <dbReference type="ChEBI" id="CHEBI:43474"/>
        <dbReference type="ChEBI" id="CHEBI:456216"/>
        <dbReference type="EC" id="7.1.2.2"/>
    </reaction>
</comment>
<comment type="subunit">
    <text evidence="1">F-type ATPases have 2 components, CF(1) - the catalytic core - and CF(0) - the membrane proton channel. CF(1) has five subunits: alpha(3), beta(3), gamma(1), delta(1), epsilon(1). CF(0) has three main subunits: a(1), b(2) and c(9-12). The alpha and beta chains form an alternating ring which encloses part of the gamma chain. CF(1) is attached to CF(0) by a central stalk formed by the gamma and epsilon chains, while a peripheral stalk is formed by the delta and b chains.</text>
</comment>
<comment type="subcellular location">
    <subcellularLocation>
        <location evidence="1">Cell membrane</location>
        <topology evidence="1">Peripheral membrane protein</topology>
    </subcellularLocation>
</comment>
<comment type="similarity">
    <text evidence="1">Belongs to the ATPase alpha/beta chains family.</text>
</comment>
<feature type="chain" id="PRO_1000166581" description="ATP synthase subunit beta">
    <location>
        <begin position="1"/>
        <end position="465"/>
    </location>
</feature>
<feature type="binding site" evidence="1">
    <location>
        <begin position="152"/>
        <end position="159"/>
    </location>
    <ligand>
        <name>ATP</name>
        <dbReference type="ChEBI" id="CHEBI:30616"/>
    </ligand>
</feature>